<feature type="chain" id="PRO_0000170032" description="LexA repressor">
    <location>
        <begin position="1"/>
        <end position="202"/>
    </location>
</feature>
<feature type="DNA-binding region" description="H-T-H motif" evidence="1">
    <location>
        <begin position="28"/>
        <end position="48"/>
    </location>
</feature>
<feature type="active site" description="For autocatalytic cleavage activity" evidence="1">
    <location>
        <position position="119"/>
    </location>
</feature>
<feature type="active site" description="For autocatalytic cleavage activity" evidence="1">
    <location>
        <position position="156"/>
    </location>
</feature>
<feature type="site" description="Cleavage; by autolysis" evidence="1">
    <location>
        <begin position="84"/>
        <end position="85"/>
    </location>
</feature>
<reference key="1">
    <citation type="journal article" date="2001" name="Nature">
        <title>Genome sequence of enterohaemorrhagic Escherichia coli O157:H7.</title>
        <authorList>
            <person name="Perna N.T."/>
            <person name="Plunkett G. III"/>
            <person name="Burland V."/>
            <person name="Mau B."/>
            <person name="Glasner J.D."/>
            <person name="Rose D.J."/>
            <person name="Mayhew G.F."/>
            <person name="Evans P.S."/>
            <person name="Gregor J."/>
            <person name="Kirkpatrick H.A."/>
            <person name="Posfai G."/>
            <person name="Hackett J."/>
            <person name="Klink S."/>
            <person name="Boutin A."/>
            <person name="Shao Y."/>
            <person name="Miller L."/>
            <person name="Grotbeck E.J."/>
            <person name="Davis N.W."/>
            <person name="Lim A."/>
            <person name="Dimalanta E.T."/>
            <person name="Potamousis K."/>
            <person name="Apodaca J."/>
            <person name="Anantharaman T.S."/>
            <person name="Lin J."/>
            <person name="Yen G."/>
            <person name="Schwartz D.C."/>
            <person name="Welch R.A."/>
            <person name="Blattner F.R."/>
        </authorList>
    </citation>
    <scope>NUCLEOTIDE SEQUENCE [LARGE SCALE GENOMIC DNA]</scope>
    <source>
        <strain>O157:H7 / EDL933 / ATCC 700927 / EHEC</strain>
    </source>
</reference>
<reference key="2">
    <citation type="journal article" date="2001" name="DNA Res.">
        <title>Complete genome sequence of enterohemorrhagic Escherichia coli O157:H7 and genomic comparison with a laboratory strain K-12.</title>
        <authorList>
            <person name="Hayashi T."/>
            <person name="Makino K."/>
            <person name="Ohnishi M."/>
            <person name="Kurokawa K."/>
            <person name="Ishii K."/>
            <person name="Yokoyama K."/>
            <person name="Han C.-G."/>
            <person name="Ohtsubo E."/>
            <person name="Nakayama K."/>
            <person name="Murata T."/>
            <person name="Tanaka M."/>
            <person name="Tobe T."/>
            <person name="Iida T."/>
            <person name="Takami H."/>
            <person name="Honda T."/>
            <person name="Sasakawa C."/>
            <person name="Ogasawara N."/>
            <person name="Yasunaga T."/>
            <person name="Kuhara S."/>
            <person name="Shiba T."/>
            <person name="Hattori M."/>
            <person name="Shinagawa H."/>
        </authorList>
    </citation>
    <scope>NUCLEOTIDE SEQUENCE [LARGE SCALE GENOMIC DNA]</scope>
    <source>
        <strain>O157:H7 / Sakai / RIMD 0509952 / EHEC</strain>
    </source>
</reference>
<keyword id="KW-0068">Autocatalytic cleavage</keyword>
<keyword id="KW-0227">DNA damage</keyword>
<keyword id="KW-0234">DNA repair</keyword>
<keyword id="KW-0235">DNA replication</keyword>
<keyword id="KW-0238">DNA-binding</keyword>
<keyword id="KW-0378">Hydrolase</keyword>
<keyword id="KW-1185">Reference proteome</keyword>
<keyword id="KW-0678">Repressor</keyword>
<keyword id="KW-0742">SOS response</keyword>
<keyword id="KW-0804">Transcription</keyword>
<keyword id="KW-0805">Transcription regulation</keyword>
<dbReference type="EC" id="3.4.21.88" evidence="1"/>
<dbReference type="EMBL" id="AE005174">
    <property type="protein sequence ID" value="AAG59242.1"/>
    <property type="molecule type" value="Genomic_DNA"/>
</dbReference>
<dbReference type="EMBL" id="BA000007">
    <property type="protein sequence ID" value="BAB38449.1"/>
    <property type="molecule type" value="Genomic_DNA"/>
</dbReference>
<dbReference type="PIR" id="B91257">
    <property type="entry name" value="B91257"/>
</dbReference>
<dbReference type="PIR" id="F86097">
    <property type="entry name" value="F86097"/>
</dbReference>
<dbReference type="RefSeq" id="NP_313053.1">
    <property type="nucleotide sequence ID" value="NC_002695.1"/>
</dbReference>
<dbReference type="RefSeq" id="WP_000646078.1">
    <property type="nucleotide sequence ID" value="NZ_VOAI01000027.1"/>
</dbReference>
<dbReference type="SMR" id="P0A7C4"/>
<dbReference type="STRING" id="155864.Z5642"/>
<dbReference type="MEROPS" id="S24.001"/>
<dbReference type="GeneID" id="914309"/>
<dbReference type="GeneID" id="93777788"/>
<dbReference type="KEGG" id="ece:Z5642"/>
<dbReference type="KEGG" id="ecs:ECs_5026"/>
<dbReference type="PATRIC" id="fig|386585.9.peg.5249"/>
<dbReference type="eggNOG" id="COG1974">
    <property type="taxonomic scope" value="Bacteria"/>
</dbReference>
<dbReference type="HOGENOM" id="CLU_066192_45_3_6"/>
<dbReference type="OMA" id="HVWLLPH"/>
<dbReference type="Proteomes" id="UP000000558">
    <property type="component" value="Chromosome"/>
</dbReference>
<dbReference type="Proteomes" id="UP000002519">
    <property type="component" value="Chromosome"/>
</dbReference>
<dbReference type="GO" id="GO:0003677">
    <property type="term" value="F:DNA binding"/>
    <property type="evidence" value="ECO:0007669"/>
    <property type="project" value="UniProtKB-UniRule"/>
</dbReference>
<dbReference type="GO" id="GO:0004252">
    <property type="term" value="F:serine-type endopeptidase activity"/>
    <property type="evidence" value="ECO:0007669"/>
    <property type="project" value="UniProtKB-UniRule"/>
</dbReference>
<dbReference type="GO" id="GO:0006281">
    <property type="term" value="P:DNA repair"/>
    <property type="evidence" value="ECO:0007669"/>
    <property type="project" value="UniProtKB-UniRule"/>
</dbReference>
<dbReference type="GO" id="GO:0006260">
    <property type="term" value="P:DNA replication"/>
    <property type="evidence" value="ECO:0007669"/>
    <property type="project" value="UniProtKB-UniRule"/>
</dbReference>
<dbReference type="GO" id="GO:0045892">
    <property type="term" value="P:negative regulation of DNA-templated transcription"/>
    <property type="evidence" value="ECO:0007669"/>
    <property type="project" value="UniProtKB-UniRule"/>
</dbReference>
<dbReference type="GO" id="GO:0006508">
    <property type="term" value="P:proteolysis"/>
    <property type="evidence" value="ECO:0007669"/>
    <property type="project" value="InterPro"/>
</dbReference>
<dbReference type="GO" id="GO:0009432">
    <property type="term" value="P:SOS response"/>
    <property type="evidence" value="ECO:0007669"/>
    <property type="project" value="UniProtKB-UniRule"/>
</dbReference>
<dbReference type="CDD" id="cd06529">
    <property type="entry name" value="S24_LexA-like"/>
    <property type="match status" value="1"/>
</dbReference>
<dbReference type="FunFam" id="1.10.10.10:FF:000009">
    <property type="entry name" value="LexA repressor"/>
    <property type="match status" value="1"/>
</dbReference>
<dbReference type="FunFam" id="2.10.109.10:FF:000001">
    <property type="entry name" value="LexA repressor"/>
    <property type="match status" value="1"/>
</dbReference>
<dbReference type="Gene3D" id="2.10.109.10">
    <property type="entry name" value="Umud Fragment, subunit A"/>
    <property type="match status" value="1"/>
</dbReference>
<dbReference type="Gene3D" id="1.10.10.10">
    <property type="entry name" value="Winged helix-like DNA-binding domain superfamily/Winged helix DNA-binding domain"/>
    <property type="match status" value="1"/>
</dbReference>
<dbReference type="HAMAP" id="MF_00015">
    <property type="entry name" value="LexA"/>
    <property type="match status" value="1"/>
</dbReference>
<dbReference type="InterPro" id="IPR006200">
    <property type="entry name" value="LexA"/>
</dbReference>
<dbReference type="InterPro" id="IPR039418">
    <property type="entry name" value="LexA-like"/>
</dbReference>
<dbReference type="InterPro" id="IPR036286">
    <property type="entry name" value="LexA/Signal_pep-like_sf"/>
</dbReference>
<dbReference type="InterPro" id="IPR006199">
    <property type="entry name" value="LexA_DNA-bd_dom"/>
</dbReference>
<dbReference type="InterPro" id="IPR050077">
    <property type="entry name" value="LexA_repressor"/>
</dbReference>
<dbReference type="InterPro" id="IPR006197">
    <property type="entry name" value="Peptidase_S24_LexA"/>
</dbReference>
<dbReference type="InterPro" id="IPR015927">
    <property type="entry name" value="Peptidase_S24_S26A/B/C"/>
</dbReference>
<dbReference type="InterPro" id="IPR036388">
    <property type="entry name" value="WH-like_DNA-bd_sf"/>
</dbReference>
<dbReference type="InterPro" id="IPR036390">
    <property type="entry name" value="WH_DNA-bd_sf"/>
</dbReference>
<dbReference type="NCBIfam" id="TIGR00498">
    <property type="entry name" value="lexA"/>
    <property type="match status" value="1"/>
</dbReference>
<dbReference type="PANTHER" id="PTHR33516">
    <property type="entry name" value="LEXA REPRESSOR"/>
    <property type="match status" value="1"/>
</dbReference>
<dbReference type="PANTHER" id="PTHR33516:SF2">
    <property type="entry name" value="LEXA REPRESSOR-RELATED"/>
    <property type="match status" value="1"/>
</dbReference>
<dbReference type="Pfam" id="PF01726">
    <property type="entry name" value="LexA_DNA_bind"/>
    <property type="match status" value="1"/>
</dbReference>
<dbReference type="Pfam" id="PF00717">
    <property type="entry name" value="Peptidase_S24"/>
    <property type="match status" value="1"/>
</dbReference>
<dbReference type="PRINTS" id="PR00726">
    <property type="entry name" value="LEXASERPTASE"/>
</dbReference>
<dbReference type="SUPFAM" id="SSF51306">
    <property type="entry name" value="LexA/Signal peptidase"/>
    <property type="match status" value="1"/>
</dbReference>
<dbReference type="SUPFAM" id="SSF46785">
    <property type="entry name" value="Winged helix' DNA-binding domain"/>
    <property type="match status" value="1"/>
</dbReference>
<protein>
    <recommendedName>
        <fullName evidence="1">LexA repressor</fullName>
        <ecNumber evidence="1">3.4.21.88</ecNumber>
    </recommendedName>
</protein>
<gene>
    <name evidence="1" type="primary">lexA</name>
    <name type="ordered locus">Z5642</name>
    <name type="ordered locus">ECs5026</name>
</gene>
<name>LEXA_ECO57</name>
<accession>P0A7C4</accession>
<accession>P03033</accession>
<sequence>MKALTARQQEVFDLIRDHISQTGMPPTRAEIAQRLGFRSPNAAEEHLKALARKGVIEIVSGASRGIRLLQEEEEGLPLVGRVAAGEPLLAQQHIEGHYQVDPSLFKPNADFLLRVSGMSMKDIGIMDGDLLAVHKTQDVRNGQVVVARIDDEVTVKRLKKQGNKVELLPENSEFKPIVVDLRQQSFTIEGLAVGVIRNGDWL</sequence>
<proteinExistence type="inferred from homology"/>
<evidence type="ECO:0000255" key="1">
    <source>
        <dbReference type="HAMAP-Rule" id="MF_00015"/>
    </source>
</evidence>
<organism>
    <name type="scientific">Escherichia coli O157:H7</name>
    <dbReference type="NCBI Taxonomy" id="83334"/>
    <lineage>
        <taxon>Bacteria</taxon>
        <taxon>Pseudomonadati</taxon>
        <taxon>Pseudomonadota</taxon>
        <taxon>Gammaproteobacteria</taxon>
        <taxon>Enterobacterales</taxon>
        <taxon>Enterobacteriaceae</taxon>
        <taxon>Escherichia</taxon>
    </lineage>
</organism>
<comment type="function">
    <text evidence="1">Represses a number of genes involved in the response to DNA damage (SOS response), including recA and lexA. Binds to the 16 bp palindromic sequence 5'-CTGTATATATATACAG-3'. In the presence of single-stranded DNA, RecA interacts with LexA causing an autocatalytic cleavage which disrupts the DNA-binding part of LexA, leading to derepression of the SOS regulon and eventually DNA repair.</text>
</comment>
<comment type="catalytic activity">
    <reaction evidence="1">
        <text>Hydrolysis of Ala-|-Gly bond in repressor LexA.</text>
        <dbReference type="EC" id="3.4.21.88"/>
    </reaction>
</comment>
<comment type="subunit">
    <text evidence="1">Homodimer.</text>
</comment>
<comment type="similarity">
    <text evidence="1">Belongs to the peptidase S24 family.</text>
</comment>